<organism>
    <name type="scientific">Thermoanaerobacter pseudethanolicus (strain ATCC 33223 / 39E)</name>
    <name type="common">Clostridium thermohydrosulfuricum</name>
    <dbReference type="NCBI Taxonomy" id="340099"/>
    <lineage>
        <taxon>Bacteria</taxon>
        <taxon>Bacillati</taxon>
        <taxon>Bacillota</taxon>
        <taxon>Clostridia</taxon>
        <taxon>Thermoanaerobacterales</taxon>
        <taxon>Thermoanaerobacteraceae</taxon>
        <taxon>Thermoanaerobacter</taxon>
    </lineage>
</organism>
<accession>B0KBP8</accession>
<keyword id="KW-0133">Cell shape</keyword>
<keyword id="KW-0961">Cell wall biogenesis/degradation</keyword>
<keyword id="KW-0413">Isomerase</keyword>
<keyword id="KW-0573">Peptidoglycan synthesis</keyword>
<keyword id="KW-1185">Reference proteome</keyword>
<sequence length="264" mass="29706">MDSRPIGVFDSGVGGLTVLKRLVEVLPGEDYIYFGDTKRVPYGDRSEEEIKKFAKQILNFMREQKVKAVVIACNTTCAVINKSEYDVVLFDVLKAGAESAALYTINKKIGVIATTRTVESKSYEKNIKIIDKNIEVYQKACPEFVPLIEKGLYNSPIAYETASKCLKELKEKDIDTLVLGCTHYPLMASVIEEIMGENVKIVDPAIKLAYDVKDYLLKKDLLNPQIRGKAEFFVSGDKDNFIKTAEMLLGEKIENVLHVDIEKY</sequence>
<reference key="1">
    <citation type="submission" date="2008-01" db="EMBL/GenBank/DDBJ databases">
        <title>Complete sequence of Thermoanaerobacter pseudethanolicus 39E.</title>
        <authorList>
            <person name="Copeland A."/>
            <person name="Lucas S."/>
            <person name="Lapidus A."/>
            <person name="Barry K."/>
            <person name="Glavina del Rio T."/>
            <person name="Dalin E."/>
            <person name="Tice H."/>
            <person name="Pitluck S."/>
            <person name="Bruce D."/>
            <person name="Goodwin L."/>
            <person name="Saunders E."/>
            <person name="Brettin T."/>
            <person name="Detter J.C."/>
            <person name="Han C."/>
            <person name="Schmutz J."/>
            <person name="Larimer F."/>
            <person name="Land M."/>
            <person name="Hauser L."/>
            <person name="Kyrpides N."/>
            <person name="Lykidis A."/>
            <person name="Hemme C."/>
            <person name="Fields M.W."/>
            <person name="He Z."/>
            <person name="Zhou J."/>
            <person name="Richardson P."/>
        </authorList>
    </citation>
    <scope>NUCLEOTIDE SEQUENCE [LARGE SCALE GENOMIC DNA]</scope>
    <source>
        <strain>ATCC 33223 / DSM 2355 / 39E</strain>
    </source>
</reference>
<name>MURI_THEP3</name>
<proteinExistence type="inferred from homology"/>
<comment type="function">
    <text evidence="1">Provides the (R)-glutamate required for cell wall biosynthesis.</text>
</comment>
<comment type="catalytic activity">
    <reaction evidence="1">
        <text>L-glutamate = D-glutamate</text>
        <dbReference type="Rhea" id="RHEA:12813"/>
        <dbReference type="ChEBI" id="CHEBI:29985"/>
        <dbReference type="ChEBI" id="CHEBI:29986"/>
        <dbReference type="EC" id="5.1.1.3"/>
    </reaction>
</comment>
<comment type="pathway">
    <text evidence="1">Cell wall biogenesis; peptidoglycan biosynthesis.</text>
</comment>
<comment type="similarity">
    <text evidence="1">Belongs to the aspartate/glutamate racemases family.</text>
</comment>
<dbReference type="EC" id="5.1.1.3" evidence="1"/>
<dbReference type="EMBL" id="CP000924">
    <property type="protein sequence ID" value="ABY95343.1"/>
    <property type="molecule type" value="Genomic_DNA"/>
</dbReference>
<dbReference type="RefSeq" id="WP_004402425.1">
    <property type="nucleotide sequence ID" value="NC_010321.1"/>
</dbReference>
<dbReference type="SMR" id="B0KBP8"/>
<dbReference type="STRING" id="340099.Teth39_1706"/>
<dbReference type="KEGG" id="tpd:Teth39_1706"/>
<dbReference type="eggNOG" id="COG0796">
    <property type="taxonomic scope" value="Bacteria"/>
</dbReference>
<dbReference type="HOGENOM" id="CLU_052344_0_2_9"/>
<dbReference type="UniPathway" id="UPA00219"/>
<dbReference type="Proteomes" id="UP000002156">
    <property type="component" value="Chromosome"/>
</dbReference>
<dbReference type="GO" id="GO:0008881">
    <property type="term" value="F:glutamate racemase activity"/>
    <property type="evidence" value="ECO:0007669"/>
    <property type="project" value="UniProtKB-UniRule"/>
</dbReference>
<dbReference type="GO" id="GO:0071555">
    <property type="term" value="P:cell wall organization"/>
    <property type="evidence" value="ECO:0007669"/>
    <property type="project" value="UniProtKB-KW"/>
</dbReference>
<dbReference type="GO" id="GO:0009252">
    <property type="term" value="P:peptidoglycan biosynthetic process"/>
    <property type="evidence" value="ECO:0007669"/>
    <property type="project" value="UniProtKB-UniRule"/>
</dbReference>
<dbReference type="GO" id="GO:0008360">
    <property type="term" value="P:regulation of cell shape"/>
    <property type="evidence" value="ECO:0007669"/>
    <property type="project" value="UniProtKB-KW"/>
</dbReference>
<dbReference type="FunFam" id="3.40.50.1860:FF:000001">
    <property type="entry name" value="Glutamate racemase"/>
    <property type="match status" value="1"/>
</dbReference>
<dbReference type="Gene3D" id="3.40.50.1860">
    <property type="match status" value="2"/>
</dbReference>
<dbReference type="HAMAP" id="MF_00258">
    <property type="entry name" value="Glu_racemase"/>
    <property type="match status" value="1"/>
</dbReference>
<dbReference type="InterPro" id="IPR015942">
    <property type="entry name" value="Asp/Glu/hydantoin_racemase"/>
</dbReference>
<dbReference type="InterPro" id="IPR001920">
    <property type="entry name" value="Asp/Glu_race"/>
</dbReference>
<dbReference type="InterPro" id="IPR033134">
    <property type="entry name" value="Asp/Glu_racemase_AS_2"/>
</dbReference>
<dbReference type="InterPro" id="IPR004391">
    <property type="entry name" value="Glu_race"/>
</dbReference>
<dbReference type="NCBIfam" id="TIGR00067">
    <property type="entry name" value="glut_race"/>
    <property type="match status" value="1"/>
</dbReference>
<dbReference type="PANTHER" id="PTHR21198">
    <property type="entry name" value="GLUTAMATE RACEMASE"/>
    <property type="match status" value="1"/>
</dbReference>
<dbReference type="PANTHER" id="PTHR21198:SF2">
    <property type="entry name" value="GLUTAMATE RACEMASE"/>
    <property type="match status" value="1"/>
</dbReference>
<dbReference type="Pfam" id="PF01177">
    <property type="entry name" value="Asp_Glu_race"/>
    <property type="match status" value="1"/>
</dbReference>
<dbReference type="SUPFAM" id="SSF53681">
    <property type="entry name" value="Aspartate/glutamate racemase"/>
    <property type="match status" value="2"/>
</dbReference>
<dbReference type="PROSITE" id="PS00924">
    <property type="entry name" value="ASP_GLU_RACEMASE_2"/>
    <property type="match status" value="1"/>
</dbReference>
<evidence type="ECO:0000255" key="1">
    <source>
        <dbReference type="HAMAP-Rule" id="MF_00258"/>
    </source>
</evidence>
<feature type="chain" id="PRO_1000114071" description="Glutamate racemase">
    <location>
        <begin position="1"/>
        <end position="264"/>
    </location>
</feature>
<feature type="active site" description="Proton donor/acceptor" evidence="1">
    <location>
        <position position="73"/>
    </location>
</feature>
<feature type="active site" description="Proton donor/acceptor" evidence="1">
    <location>
        <position position="181"/>
    </location>
</feature>
<feature type="binding site" evidence="1">
    <location>
        <begin position="10"/>
        <end position="11"/>
    </location>
    <ligand>
        <name>substrate</name>
    </ligand>
</feature>
<feature type="binding site" evidence="1">
    <location>
        <begin position="42"/>
        <end position="43"/>
    </location>
    <ligand>
        <name>substrate</name>
    </ligand>
</feature>
<feature type="binding site" evidence="1">
    <location>
        <begin position="74"/>
        <end position="75"/>
    </location>
    <ligand>
        <name>substrate</name>
    </ligand>
</feature>
<feature type="binding site" evidence="1">
    <location>
        <begin position="182"/>
        <end position="183"/>
    </location>
    <ligand>
        <name>substrate</name>
    </ligand>
</feature>
<protein>
    <recommendedName>
        <fullName evidence="1">Glutamate racemase</fullName>
        <ecNumber evidence="1">5.1.1.3</ecNumber>
    </recommendedName>
</protein>
<gene>
    <name evidence="1" type="primary">murI</name>
    <name type="ordered locus">Teth39_1706</name>
</gene>